<protein>
    <recommendedName>
        <fullName evidence="1">Large ribosomal subunit protein uL4</fullName>
    </recommendedName>
    <alternativeName>
        <fullName evidence="3">50S ribosomal protein L4</fullName>
    </alternativeName>
</protein>
<organism>
    <name type="scientific">Rickettsia akari (strain Hartford)</name>
    <dbReference type="NCBI Taxonomy" id="293614"/>
    <lineage>
        <taxon>Bacteria</taxon>
        <taxon>Pseudomonadati</taxon>
        <taxon>Pseudomonadota</taxon>
        <taxon>Alphaproteobacteria</taxon>
        <taxon>Rickettsiales</taxon>
        <taxon>Rickettsiaceae</taxon>
        <taxon>Rickettsieae</taxon>
        <taxon>Rickettsia</taxon>
        <taxon>spotted fever group</taxon>
    </lineage>
</organism>
<comment type="function">
    <text evidence="1">One of the primary rRNA binding proteins, this protein initially binds near the 5'-end of the 23S rRNA. It is important during the early stages of 50S assembly. It makes multiple contacts with different domains of the 23S rRNA in the assembled 50S subunit and ribosome.</text>
</comment>
<comment type="function">
    <text evidence="1">Forms part of the polypeptide exit tunnel.</text>
</comment>
<comment type="subunit">
    <text evidence="1">Part of the 50S ribosomal subunit.</text>
</comment>
<comment type="similarity">
    <text evidence="1">Belongs to the universal ribosomal protein uL4 family.</text>
</comment>
<accession>A8GPE9</accession>
<sequence>MKTKILSLANEEVGEISLNEDIFAVEFIRDDVIKQVIDWQRAKAMSGNHKTKTVSEVSGTTKKPFKQKGTGNARQGSLRSVQMRGGGVAHGPRVRSHVTKLPKKVRKLGLIHALSEKFAEGRLLVIDSLKLDQPKTSALVNILSKFQGKSFFVIDGNEVDTNFSLAAKNIYNTAIVPQIGANVYDIIRYEYVLLSQEAVSVLEERLR</sequence>
<proteinExistence type="inferred from homology"/>
<gene>
    <name evidence="1" type="primary">rplD</name>
    <name type="ordered locus">A1C_05100</name>
</gene>
<reference key="1">
    <citation type="submission" date="2007-09" db="EMBL/GenBank/DDBJ databases">
        <title>Complete genome sequence of Rickettsia akari.</title>
        <authorList>
            <person name="Madan A."/>
            <person name="Fahey J."/>
            <person name="Helton E."/>
            <person name="Ketteman M."/>
            <person name="Madan A."/>
            <person name="Rodrigues S."/>
            <person name="Sanchez A."/>
            <person name="Whiting M."/>
            <person name="Dasch G."/>
            <person name="Eremeeva M."/>
        </authorList>
    </citation>
    <scope>NUCLEOTIDE SEQUENCE [LARGE SCALE GENOMIC DNA]</scope>
    <source>
        <strain>Hartford</strain>
    </source>
</reference>
<keyword id="KW-0687">Ribonucleoprotein</keyword>
<keyword id="KW-0689">Ribosomal protein</keyword>
<keyword id="KW-0694">RNA-binding</keyword>
<keyword id="KW-0699">rRNA-binding</keyword>
<feature type="chain" id="PRO_1000052483" description="Large ribosomal subunit protein uL4">
    <location>
        <begin position="1"/>
        <end position="207"/>
    </location>
</feature>
<feature type="region of interest" description="Disordered" evidence="2">
    <location>
        <begin position="50"/>
        <end position="75"/>
    </location>
</feature>
<dbReference type="EMBL" id="CP000847">
    <property type="protein sequence ID" value="ABV75274.1"/>
    <property type="molecule type" value="Genomic_DNA"/>
</dbReference>
<dbReference type="RefSeq" id="WP_012149904.1">
    <property type="nucleotide sequence ID" value="NC_009881.1"/>
</dbReference>
<dbReference type="SMR" id="A8GPE9"/>
<dbReference type="STRING" id="293614.A1C_05100"/>
<dbReference type="KEGG" id="rak:A1C_05100"/>
<dbReference type="eggNOG" id="COG0088">
    <property type="taxonomic scope" value="Bacteria"/>
</dbReference>
<dbReference type="HOGENOM" id="CLU_041575_5_1_5"/>
<dbReference type="Proteomes" id="UP000006830">
    <property type="component" value="Chromosome"/>
</dbReference>
<dbReference type="GO" id="GO:1990904">
    <property type="term" value="C:ribonucleoprotein complex"/>
    <property type="evidence" value="ECO:0007669"/>
    <property type="project" value="UniProtKB-KW"/>
</dbReference>
<dbReference type="GO" id="GO:0005840">
    <property type="term" value="C:ribosome"/>
    <property type="evidence" value="ECO:0007669"/>
    <property type="project" value="UniProtKB-KW"/>
</dbReference>
<dbReference type="GO" id="GO:0019843">
    <property type="term" value="F:rRNA binding"/>
    <property type="evidence" value="ECO:0007669"/>
    <property type="project" value="UniProtKB-UniRule"/>
</dbReference>
<dbReference type="GO" id="GO:0003735">
    <property type="term" value="F:structural constituent of ribosome"/>
    <property type="evidence" value="ECO:0007669"/>
    <property type="project" value="InterPro"/>
</dbReference>
<dbReference type="GO" id="GO:0006412">
    <property type="term" value="P:translation"/>
    <property type="evidence" value="ECO:0007669"/>
    <property type="project" value="UniProtKB-UniRule"/>
</dbReference>
<dbReference type="FunFam" id="3.40.1370.10:FF:000015">
    <property type="entry name" value="50S ribosomal protein L4"/>
    <property type="match status" value="1"/>
</dbReference>
<dbReference type="Gene3D" id="3.40.1370.10">
    <property type="match status" value="1"/>
</dbReference>
<dbReference type="HAMAP" id="MF_01328_B">
    <property type="entry name" value="Ribosomal_uL4_B"/>
    <property type="match status" value="1"/>
</dbReference>
<dbReference type="InterPro" id="IPR002136">
    <property type="entry name" value="Ribosomal_uL4"/>
</dbReference>
<dbReference type="InterPro" id="IPR013005">
    <property type="entry name" value="Ribosomal_uL4-like"/>
</dbReference>
<dbReference type="InterPro" id="IPR023574">
    <property type="entry name" value="Ribosomal_uL4_dom_sf"/>
</dbReference>
<dbReference type="NCBIfam" id="TIGR03953">
    <property type="entry name" value="rplD_bact"/>
    <property type="match status" value="1"/>
</dbReference>
<dbReference type="PANTHER" id="PTHR10746">
    <property type="entry name" value="50S RIBOSOMAL PROTEIN L4"/>
    <property type="match status" value="1"/>
</dbReference>
<dbReference type="PANTHER" id="PTHR10746:SF6">
    <property type="entry name" value="LARGE RIBOSOMAL SUBUNIT PROTEIN UL4M"/>
    <property type="match status" value="1"/>
</dbReference>
<dbReference type="Pfam" id="PF00573">
    <property type="entry name" value="Ribosomal_L4"/>
    <property type="match status" value="1"/>
</dbReference>
<dbReference type="SUPFAM" id="SSF52166">
    <property type="entry name" value="Ribosomal protein L4"/>
    <property type="match status" value="1"/>
</dbReference>
<name>RL4_RICAH</name>
<evidence type="ECO:0000255" key="1">
    <source>
        <dbReference type="HAMAP-Rule" id="MF_01328"/>
    </source>
</evidence>
<evidence type="ECO:0000256" key="2">
    <source>
        <dbReference type="SAM" id="MobiDB-lite"/>
    </source>
</evidence>
<evidence type="ECO:0000305" key="3"/>